<accession>B3EU56</accession>
<proteinExistence type="inferred from homology"/>
<feature type="chain" id="PRO_1000097228" description="Lipoprotein signal peptidase">
    <location>
        <begin position="1"/>
        <end position="236"/>
    </location>
</feature>
<feature type="transmembrane region" description="Helical" evidence="1">
    <location>
        <begin position="8"/>
        <end position="28"/>
    </location>
</feature>
<feature type="transmembrane region" description="Helical" evidence="1">
    <location>
        <begin position="44"/>
        <end position="64"/>
    </location>
</feature>
<feature type="transmembrane region" description="Helical" evidence="1">
    <location>
        <begin position="68"/>
        <end position="88"/>
    </location>
</feature>
<feature type="transmembrane region" description="Helical" evidence="1">
    <location>
        <begin position="98"/>
        <end position="118"/>
    </location>
</feature>
<feature type="transmembrane region" description="Helical" evidence="1">
    <location>
        <begin position="166"/>
        <end position="186"/>
    </location>
</feature>
<feature type="active site" evidence="1">
    <location>
        <position position="141"/>
    </location>
</feature>
<feature type="active site" evidence="1">
    <location>
        <position position="174"/>
    </location>
</feature>
<dbReference type="EC" id="3.4.23.36" evidence="1"/>
<dbReference type="EMBL" id="CP001102">
    <property type="protein sequence ID" value="ACE05475.1"/>
    <property type="molecule type" value="Genomic_DNA"/>
</dbReference>
<dbReference type="RefSeq" id="WP_012472247.1">
    <property type="nucleotide sequence ID" value="NC_010830.1"/>
</dbReference>
<dbReference type="SMR" id="B3EU56"/>
<dbReference type="STRING" id="452471.Aasi_0018"/>
<dbReference type="KEGG" id="aas:Aasi_0018"/>
<dbReference type="eggNOG" id="COG0597">
    <property type="taxonomic scope" value="Bacteria"/>
</dbReference>
<dbReference type="HOGENOM" id="CLU_083252_0_1_10"/>
<dbReference type="OrthoDB" id="9810259at2"/>
<dbReference type="UniPathway" id="UPA00665"/>
<dbReference type="Proteomes" id="UP000001227">
    <property type="component" value="Chromosome"/>
</dbReference>
<dbReference type="GO" id="GO:0005886">
    <property type="term" value="C:plasma membrane"/>
    <property type="evidence" value="ECO:0007669"/>
    <property type="project" value="UniProtKB-SubCell"/>
</dbReference>
<dbReference type="GO" id="GO:0004190">
    <property type="term" value="F:aspartic-type endopeptidase activity"/>
    <property type="evidence" value="ECO:0007669"/>
    <property type="project" value="UniProtKB-UniRule"/>
</dbReference>
<dbReference type="GO" id="GO:0006508">
    <property type="term" value="P:proteolysis"/>
    <property type="evidence" value="ECO:0007669"/>
    <property type="project" value="UniProtKB-KW"/>
</dbReference>
<dbReference type="HAMAP" id="MF_00161">
    <property type="entry name" value="LspA"/>
    <property type="match status" value="1"/>
</dbReference>
<dbReference type="InterPro" id="IPR001872">
    <property type="entry name" value="Peptidase_A8"/>
</dbReference>
<dbReference type="NCBIfam" id="NF011369">
    <property type="entry name" value="PRK14788.1"/>
    <property type="match status" value="1"/>
</dbReference>
<dbReference type="PANTHER" id="PTHR33695">
    <property type="entry name" value="LIPOPROTEIN SIGNAL PEPTIDASE"/>
    <property type="match status" value="1"/>
</dbReference>
<dbReference type="PANTHER" id="PTHR33695:SF1">
    <property type="entry name" value="LIPOPROTEIN SIGNAL PEPTIDASE"/>
    <property type="match status" value="1"/>
</dbReference>
<dbReference type="Pfam" id="PF01252">
    <property type="entry name" value="Peptidase_A8"/>
    <property type="match status" value="1"/>
</dbReference>
<dbReference type="PRINTS" id="PR00781">
    <property type="entry name" value="LIPOSIGPTASE"/>
</dbReference>
<sequence>MTKKVWKFYGIALLAVVIDQVLKLWVYFNMQMGTLGQIKLLGNWFKLFYTLNPGMAFGIQFGFTYDKVLLTIIRIIATSMIIKYIWNLAKETNSSKWLLWGWSLILGGAAGNGIDSIFYGKILHNAPYGAPMSWFYGQVIDMLYIDLWSGRLPDWVPWYSGYYVTCLPVFNLADVAILAGVALIVLDKRASIQQPVQKYEATEVTDSELLETRHELVDPITEHNNTEHNHPEVEDK</sequence>
<keyword id="KW-0064">Aspartyl protease</keyword>
<keyword id="KW-0997">Cell inner membrane</keyword>
<keyword id="KW-1003">Cell membrane</keyword>
<keyword id="KW-0378">Hydrolase</keyword>
<keyword id="KW-0472">Membrane</keyword>
<keyword id="KW-0645">Protease</keyword>
<keyword id="KW-1185">Reference proteome</keyword>
<keyword id="KW-0812">Transmembrane</keyword>
<keyword id="KW-1133">Transmembrane helix</keyword>
<name>LSPA_AMOA5</name>
<organism>
    <name type="scientific">Amoebophilus asiaticus (strain 5a2)</name>
    <dbReference type="NCBI Taxonomy" id="452471"/>
    <lineage>
        <taxon>Bacteria</taxon>
        <taxon>Pseudomonadati</taxon>
        <taxon>Bacteroidota</taxon>
        <taxon>Cytophagia</taxon>
        <taxon>Cytophagales</taxon>
        <taxon>Amoebophilaceae</taxon>
        <taxon>Candidatus Amoebophilus</taxon>
    </lineage>
</organism>
<protein>
    <recommendedName>
        <fullName evidence="1">Lipoprotein signal peptidase</fullName>
        <ecNumber evidence="1">3.4.23.36</ecNumber>
    </recommendedName>
    <alternativeName>
        <fullName evidence="1">Prolipoprotein signal peptidase</fullName>
    </alternativeName>
    <alternativeName>
        <fullName evidence="1">Signal peptidase II</fullName>
        <shortName evidence="1">SPase II</shortName>
    </alternativeName>
</protein>
<evidence type="ECO:0000255" key="1">
    <source>
        <dbReference type="HAMAP-Rule" id="MF_00161"/>
    </source>
</evidence>
<comment type="function">
    <text evidence="1">This protein specifically catalyzes the removal of signal peptides from prolipoproteins.</text>
</comment>
<comment type="catalytic activity">
    <reaction evidence="1">
        <text>Release of signal peptides from bacterial membrane prolipoproteins. Hydrolyzes -Xaa-Yaa-Zaa-|-(S,diacylglyceryl)Cys-, in which Xaa is hydrophobic (preferably Leu), and Yaa (Ala or Ser) and Zaa (Gly or Ala) have small, neutral side chains.</text>
        <dbReference type="EC" id="3.4.23.36"/>
    </reaction>
</comment>
<comment type="pathway">
    <text evidence="1">Protein modification; lipoprotein biosynthesis (signal peptide cleavage).</text>
</comment>
<comment type="subcellular location">
    <subcellularLocation>
        <location evidence="1">Cell inner membrane</location>
        <topology evidence="1">Multi-pass membrane protein</topology>
    </subcellularLocation>
</comment>
<comment type="similarity">
    <text evidence="1">Belongs to the peptidase A8 family.</text>
</comment>
<reference key="1">
    <citation type="journal article" date="2010" name="J. Bacteriol.">
        <title>The genome of the amoeba symbiont 'Candidatus Amoebophilus asiaticus' reveals common mechanisms for host cell interaction among amoeba-associated bacteria.</title>
        <authorList>
            <person name="Schmitz-Esser S."/>
            <person name="Tischler P."/>
            <person name="Arnold R."/>
            <person name="Montanaro J."/>
            <person name="Wagner M."/>
            <person name="Rattei T."/>
            <person name="Horn M."/>
        </authorList>
    </citation>
    <scope>NUCLEOTIDE SEQUENCE [LARGE SCALE GENOMIC DNA]</scope>
    <source>
        <strain>5a2</strain>
    </source>
</reference>
<gene>
    <name evidence="1" type="primary">lspA</name>
    <name type="ordered locus">Aasi_0018</name>
</gene>